<evidence type="ECO:0000255" key="1">
    <source>
        <dbReference type="HAMAP-Rule" id="MF_01643"/>
    </source>
</evidence>
<feature type="chain" id="PRO_0000319199" description="Formate-dependent phosphoribosylglycinamide formyltransferase">
    <location>
        <begin position="1"/>
        <end position="391"/>
    </location>
</feature>
<feature type="domain" description="ATP-grasp" evidence="1">
    <location>
        <begin position="115"/>
        <end position="305"/>
    </location>
</feature>
<feature type="binding site" evidence="1">
    <location>
        <begin position="18"/>
        <end position="19"/>
    </location>
    <ligand>
        <name>N(1)-(5-phospho-beta-D-ribosyl)glycinamide</name>
        <dbReference type="ChEBI" id="CHEBI:143788"/>
    </ligand>
</feature>
<feature type="binding site" evidence="1">
    <location>
        <position position="78"/>
    </location>
    <ligand>
        <name>N(1)-(5-phospho-beta-D-ribosyl)glycinamide</name>
        <dbReference type="ChEBI" id="CHEBI:143788"/>
    </ligand>
</feature>
<feature type="binding site" evidence="1">
    <location>
        <position position="110"/>
    </location>
    <ligand>
        <name>ATP</name>
        <dbReference type="ChEBI" id="CHEBI:30616"/>
    </ligand>
</feature>
<feature type="binding site" evidence="1">
    <location>
        <position position="151"/>
    </location>
    <ligand>
        <name>ATP</name>
        <dbReference type="ChEBI" id="CHEBI:30616"/>
    </ligand>
</feature>
<feature type="binding site" evidence="1">
    <location>
        <begin position="156"/>
        <end position="161"/>
    </location>
    <ligand>
        <name>ATP</name>
        <dbReference type="ChEBI" id="CHEBI:30616"/>
    </ligand>
</feature>
<feature type="binding site" evidence="1">
    <location>
        <begin position="191"/>
        <end position="194"/>
    </location>
    <ligand>
        <name>ATP</name>
        <dbReference type="ChEBI" id="CHEBI:30616"/>
    </ligand>
</feature>
<feature type="binding site" evidence="1">
    <location>
        <position position="199"/>
    </location>
    <ligand>
        <name>ATP</name>
        <dbReference type="ChEBI" id="CHEBI:30616"/>
    </ligand>
</feature>
<feature type="binding site" evidence="1">
    <location>
        <position position="264"/>
    </location>
    <ligand>
        <name>Mg(2+)</name>
        <dbReference type="ChEBI" id="CHEBI:18420"/>
    </ligand>
</feature>
<feature type="binding site" evidence="1">
    <location>
        <position position="276"/>
    </location>
    <ligand>
        <name>Mg(2+)</name>
        <dbReference type="ChEBI" id="CHEBI:18420"/>
    </ligand>
</feature>
<feature type="binding site" evidence="1">
    <location>
        <position position="283"/>
    </location>
    <ligand>
        <name>N(1)-(5-phospho-beta-D-ribosyl)glycinamide</name>
        <dbReference type="ChEBI" id="CHEBI:143788"/>
    </ligand>
</feature>
<feature type="binding site" evidence="1">
    <location>
        <position position="353"/>
    </location>
    <ligand>
        <name>N(1)-(5-phospho-beta-D-ribosyl)glycinamide</name>
        <dbReference type="ChEBI" id="CHEBI:143788"/>
    </ligand>
</feature>
<feature type="binding site" evidence="1">
    <location>
        <begin position="360"/>
        <end position="361"/>
    </location>
    <ligand>
        <name>N(1)-(5-phospho-beta-D-ribosyl)glycinamide</name>
        <dbReference type="ChEBI" id="CHEBI:143788"/>
    </ligand>
</feature>
<comment type="function">
    <text evidence="1">Involved in the de novo purine biosynthesis. Catalyzes the transfer of formate to 5-phospho-ribosyl-glycinamide (GAR), producing 5-phospho-ribosyl-N-formylglycinamide (FGAR). Formate is provided by PurU via hydrolysis of 10-formyl-tetrahydrofolate.</text>
</comment>
<comment type="catalytic activity">
    <reaction evidence="1">
        <text>N(1)-(5-phospho-beta-D-ribosyl)glycinamide + formate + ATP = N(2)-formyl-N(1)-(5-phospho-beta-D-ribosyl)glycinamide + ADP + phosphate + H(+)</text>
        <dbReference type="Rhea" id="RHEA:24829"/>
        <dbReference type="ChEBI" id="CHEBI:15378"/>
        <dbReference type="ChEBI" id="CHEBI:15740"/>
        <dbReference type="ChEBI" id="CHEBI:30616"/>
        <dbReference type="ChEBI" id="CHEBI:43474"/>
        <dbReference type="ChEBI" id="CHEBI:143788"/>
        <dbReference type="ChEBI" id="CHEBI:147286"/>
        <dbReference type="ChEBI" id="CHEBI:456216"/>
        <dbReference type="EC" id="6.3.1.21"/>
    </reaction>
    <physiologicalReaction direction="left-to-right" evidence="1">
        <dbReference type="Rhea" id="RHEA:24830"/>
    </physiologicalReaction>
</comment>
<comment type="pathway">
    <text evidence="1">Purine metabolism; IMP biosynthesis via de novo pathway; N(2)-formyl-N(1)-(5-phospho-D-ribosyl)glycinamide from N(1)-(5-phospho-D-ribosyl)glycinamide (formate route): step 1/1.</text>
</comment>
<comment type="subunit">
    <text evidence="1">Homodimer.</text>
</comment>
<comment type="similarity">
    <text evidence="1">Belongs to the PurK/PurT family.</text>
</comment>
<name>PURT_PROMS</name>
<sequence length="391" mass="44249">MKESIFSKKRILLLGSGELGKELVIESKRLGLEVIAIDRYEKAPAMQVADYSRVIEMGDKNILKNVIKEFKPDYVVPEIEALSIEALKELEDEGFNIVPNARTVEITMNRDKIRDLASKDLKIKTAKFDYIFEFDDLEKKADEIGFPLLLKPLMSSSGKGQSLVETKNDLQNAWKQAQANSRGKVKGVIIEEFINFDFEFTLLTVRKENGENIFCLPIGHLQSNGDYQCSWQPLEIKESLIIEAKRMTSRILNNLNGAGLYGVEFFIKGSEVIFSELSPRPHDTGMVTLVSQNINEFELHLRAFLNLPIPRIDLIEPSATRVILSNQEYLNPIYEGLYEALEFEKTKVLIFGKPVSRKGRRMGVVLSSNTDINLARKNADEAALKIKVSTT</sequence>
<reference key="1">
    <citation type="journal article" date="2007" name="PLoS Genet.">
        <title>Patterns and implications of gene gain and loss in the evolution of Prochlorococcus.</title>
        <authorList>
            <person name="Kettler G.C."/>
            <person name="Martiny A.C."/>
            <person name="Huang K."/>
            <person name="Zucker J."/>
            <person name="Coleman M.L."/>
            <person name="Rodrigue S."/>
            <person name="Chen F."/>
            <person name="Lapidus A."/>
            <person name="Ferriera S."/>
            <person name="Johnson J."/>
            <person name="Steglich C."/>
            <person name="Church G.M."/>
            <person name="Richardson P."/>
            <person name="Chisholm S.W."/>
        </authorList>
    </citation>
    <scope>NUCLEOTIDE SEQUENCE [LARGE SCALE GENOMIC DNA]</scope>
    <source>
        <strain>AS9601</strain>
    </source>
</reference>
<organism>
    <name type="scientific">Prochlorococcus marinus (strain AS9601)</name>
    <dbReference type="NCBI Taxonomy" id="146891"/>
    <lineage>
        <taxon>Bacteria</taxon>
        <taxon>Bacillati</taxon>
        <taxon>Cyanobacteriota</taxon>
        <taxon>Cyanophyceae</taxon>
        <taxon>Synechococcales</taxon>
        <taxon>Prochlorococcaceae</taxon>
        <taxon>Prochlorococcus</taxon>
    </lineage>
</organism>
<keyword id="KW-0067">ATP-binding</keyword>
<keyword id="KW-0436">Ligase</keyword>
<keyword id="KW-0460">Magnesium</keyword>
<keyword id="KW-0479">Metal-binding</keyword>
<keyword id="KW-0547">Nucleotide-binding</keyword>
<keyword id="KW-0658">Purine biosynthesis</keyword>
<gene>
    <name evidence="1" type="primary">purT</name>
    <name type="ordered locus">A9601_10931</name>
</gene>
<proteinExistence type="inferred from homology"/>
<dbReference type="EC" id="6.3.1.21" evidence="1"/>
<dbReference type="EMBL" id="CP000551">
    <property type="protein sequence ID" value="ABM70377.1"/>
    <property type="molecule type" value="Genomic_DNA"/>
</dbReference>
<dbReference type="RefSeq" id="WP_011818528.1">
    <property type="nucleotide sequence ID" value="NC_008816.1"/>
</dbReference>
<dbReference type="SMR" id="A2BRG6"/>
<dbReference type="STRING" id="146891.A9601_10931"/>
<dbReference type="KEGG" id="pmb:A9601_10931"/>
<dbReference type="eggNOG" id="COG0027">
    <property type="taxonomic scope" value="Bacteria"/>
</dbReference>
<dbReference type="HOGENOM" id="CLU_011534_1_3_3"/>
<dbReference type="OrthoDB" id="9804625at2"/>
<dbReference type="UniPathway" id="UPA00074">
    <property type="reaction ID" value="UER00127"/>
</dbReference>
<dbReference type="Proteomes" id="UP000002590">
    <property type="component" value="Chromosome"/>
</dbReference>
<dbReference type="GO" id="GO:0005829">
    <property type="term" value="C:cytosol"/>
    <property type="evidence" value="ECO:0007669"/>
    <property type="project" value="TreeGrafter"/>
</dbReference>
<dbReference type="GO" id="GO:0005524">
    <property type="term" value="F:ATP binding"/>
    <property type="evidence" value="ECO:0007669"/>
    <property type="project" value="UniProtKB-UniRule"/>
</dbReference>
<dbReference type="GO" id="GO:0000287">
    <property type="term" value="F:magnesium ion binding"/>
    <property type="evidence" value="ECO:0007669"/>
    <property type="project" value="InterPro"/>
</dbReference>
<dbReference type="GO" id="GO:0043815">
    <property type="term" value="F:phosphoribosylglycinamide formyltransferase 2 activity"/>
    <property type="evidence" value="ECO:0007669"/>
    <property type="project" value="UniProtKB-UniRule"/>
</dbReference>
<dbReference type="GO" id="GO:0004644">
    <property type="term" value="F:phosphoribosylglycinamide formyltransferase activity"/>
    <property type="evidence" value="ECO:0007669"/>
    <property type="project" value="InterPro"/>
</dbReference>
<dbReference type="GO" id="GO:0006189">
    <property type="term" value="P:'de novo' IMP biosynthetic process"/>
    <property type="evidence" value="ECO:0007669"/>
    <property type="project" value="UniProtKB-UniRule"/>
</dbReference>
<dbReference type="Gene3D" id="3.40.50.20">
    <property type="match status" value="1"/>
</dbReference>
<dbReference type="Gene3D" id="3.30.1490.20">
    <property type="entry name" value="ATP-grasp fold, A domain"/>
    <property type="match status" value="1"/>
</dbReference>
<dbReference type="Gene3D" id="3.30.470.20">
    <property type="entry name" value="ATP-grasp fold, B domain"/>
    <property type="match status" value="1"/>
</dbReference>
<dbReference type="HAMAP" id="MF_01643">
    <property type="entry name" value="PurT"/>
    <property type="match status" value="1"/>
</dbReference>
<dbReference type="InterPro" id="IPR011761">
    <property type="entry name" value="ATP-grasp"/>
</dbReference>
<dbReference type="InterPro" id="IPR003135">
    <property type="entry name" value="ATP-grasp_carboxylate-amine"/>
</dbReference>
<dbReference type="InterPro" id="IPR013815">
    <property type="entry name" value="ATP_grasp_subdomain_1"/>
</dbReference>
<dbReference type="InterPro" id="IPR016185">
    <property type="entry name" value="PreATP-grasp_dom_sf"/>
</dbReference>
<dbReference type="InterPro" id="IPR005862">
    <property type="entry name" value="PurT"/>
</dbReference>
<dbReference type="InterPro" id="IPR054350">
    <property type="entry name" value="PurT/PurK_preATP-grasp"/>
</dbReference>
<dbReference type="InterPro" id="IPR048740">
    <property type="entry name" value="PurT_C"/>
</dbReference>
<dbReference type="InterPro" id="IPR011054">
    <property type="entry name" value="Rudment_hybrid_motif"/>
</dbReference>
<dbReference type="NCBIfam" id="NF006766">
    <property type="entry name" value="PRK09288.1"/>
    <property type="match status" value="1"/>
</dbReference>
<dbReference type="NCBIfam" id="TIGR01142">
    <property type="entry name" value="purT"/>
    <property type="match status" value="1"/>
</dbReference>
<dbReference type="PANTHER" id="PTHR43055">
    <property type="entry name" value="FORMATE-DEPENDENT PHOSPHORIBOSYLGLYCINAMIDE FORMYLTRANSFERASE"/>
    <property type="match status" value="1"/>
</dbReference>
<dbReference type="PANTHER" id="PTHR43055:SF1">
    <property type="entry name" value="FORMATE-DEPENDENT PHOSPHORIBOSYLGLYCINAMIDE FORMYLTRANSFERASE"/>
    <property type="match status" value="1"/>
</dbReference>
<dbReference type="Pfam" id="PF02222">
    <property type="entry name" value="ATP-grasp"/>
    <property type="match status" value="1"/>
</dbReference>
<dbReference type="Pfam" id="PF21244">
    <property type="entry name" value="PurT_C"/>
    <property type="match status" value="1"/>
</dbReference>
<dbReference type="Pfam" id="PF22660">
    <property type="entry name" value="RS_preATP-grasp-like"/>
    <property type="match status" value="1"/>
</dbReference>
<dbReference type="SUPFAM" id="SSF56059">
    <property type="entry name" value="Glutathione synthetase ATP-binding domain-like"/>
    <property type="match status" value="1"/>
</dbReference>
<dbReference type="SUPFAM" id="SSF52440">
    <property type="entry name" value="PreATP-grasp domain"/>
    <property type="match status" value="1"/>
</dbReference>
<dbReference type="SUPFAM" id="SSF51246">
    <property type="entry name" value="Rudiment single hybrid motif"/>
    <property type="match status" value="1"/>
</dbReference>
<dbReference type="PROSITE" id="PS50975">
    <property type="entry name" value="ATP_GRASP"/>
    <property type="match status" value="1"/>
</dbReference>
<accession>A2BRG6</accession>
<protein>
    <recommendedName>
        <fullName evidence="1">Formate-dependent phosphoribosylglycinamide formyltransferase</fullName>
        <ecNumber evidence="1">6.3.1.21</ecNumber>
    </recommendedName>
    <alternativeName>
        <fullName evidence="1">5'-phosphoribosylglycinamide transformylase 2</fullName>
    </alternativeName>
    <alternativeName>
        <fullName evidence="1">Formate-dependent GAR transformylase</fullName>
    </alternativeName>
    <alternativeName>
        <fullName evidence="1">GAR transformylase 2</fullName>
        <shortName evidence="1">GART 2</shortName>
    </alternativeName>
    <alternativeName>
        <fullName evidence="1">Non-folate glycinamide ribonucleotide transformylase</fullName>
    </alternativeName>
    <alternativeName>
        <fullName evidence="1">Phosphoribosylglycinamide formyltransferase 2</fullName>
    </alternativeName>
</protein>